<reference key="1">
    <citation type="journal article" date="2005" name="J. Infect. Dis.">
        <title>Genome sequence of a serotype M28 strain of group A Streptococcus: potential new insights into puerperal sepsis and bacterial disease specificity.</title>
        <authorList>
            <person name="Green N.M."/>
            <person name="Zhang S."/>
            <person name="Porcella S.F."/>
            <person name="Nagiec M.J."/>
            <person name="Barbian K.D."/>
            <person name="Beres S.B."/>
            <person name="Lefebvre R.B."/>
            <person name="Musser J.M."/>
        </authorList>
    </citation>
    <scope>NUCLEOTIDE SEQUENCE [LARGE SCALE GENOMIC DNA]</scope>
    <source>
        <strain>MGAS6180</strain>
    </source>
</reference>
<name>KITH_STRPM</name>
<keyword id="KW-0067">ATP-binding</keyword>
<keyword id="KW-0963">Cytoplasm</keyword>
<keyword id="KW-0237">DNA synthesis</keyword>
<keyword id="KW-0418">Kinase</keyword>
<keyword id="KW-0479">Metal-binding</keyword>
<keyword id="KW-0547">Nucleotide-binding</keyword>
<keyword id="KW-0808">Transferase</keyword>
<keyword id="KW-0862">Zinc</keyword>
<dbReference type="EC" id="2.7.1.21" evidence="1"/>
<dbReference type="EMBL" id="CP000056">
    <property type="protein sequence ID" value="AAX71949.1"/>
    <property type="molecule type" value="Genomic_DNA"/>
</dbReference>
<dbReference type="RefSeq" id="WP_002989802.1">
    <property type="nucleotide sequence ID" value="NC_007296.2"/>
</dbReference>
<dbReference type="SMR" id="Q48TL1"/>
<dbReference type="KEGG" id="spb:M28_Spy0836"/>
<dbReference type="HOGENOM" id="CLU_064400_2_2_9"/>
<dbReference type="GO" id="GO:0005829">
    <property type="term" value="C:cytosol"/>
    <property type="evidence" value="ECO:0007669"/>
    <property type="project" value="TreeGrafter"/>
</dbReference>
<dbReference type="GO" id="GO:0005524">
    <property type="term" value="F:ATP binding"/>
    <property type="evidence" value="ECO:0007669"/>
    <property type="project" value="UniProtKB-UniRule"/>
</dbReference>
<dbReference type="GO" id="GO:0004797">
    <property type="term" value="F:thymidine kinase activity"/>
    <property type="evidence" value="ECO:0007669"/>
    <property type="project" value="UniProtKB-UniRule"/>
</dbReference>
<dbReference type="GO" id="GO:0008270">
    <property type="term" value="F:zinc ion binding"/>
    <property type="evidence" value="ECO:0007669"/>
    <property type="project" value="UniProtKB-UniRule"/>
</dbReference>
<dbReference type="GO" id="GO:0071897">
    <property type="term" value="P:DNA biosynthetic process"/>
    <property type="evidence" value="ECO:0007669"/>
    <property type="project" value="UniProtKB-KW"/>
</dbReference>
<dbReference type="GO" id="GO:0046104">
    <property type="term" value="P:thymidine metabolic process"/>
    <property type="evidence" value="ECO:0007669"/>
    <property type="project" value="TreeGrafter"/>
</dbReference>
<dbReference type="Gene3D" id="3.30.60.20">
    <property type="match status" value="1"/>
</dbReference>
<dbReference type="Gene3D" id="3.40.50.300">
    <property type="entry name" value="P-loop containing nucleotide triphosphate hydrolases"/>
    <property type="match status" value="1"/>
</dbReference>
<dbReference type="HAMAP" id="MF_00124">
    <property type="entry name" value="Thymidine_kinase"/>
    <property type="match status" value="1"/>
</dbReference>
<dbReference type="InterPro" id="IPR027417">
    <property type="entry name" value="P-loop_NTPase"/>
</dbReference>
<dbReference type="InterPro" id="IPR001267">
    <property type="entry name" value="Thymidine_kinase"/>
</dbReference>
<dbReference type="InterPro" id="IPR020633">
    <property type="entry name" value="Thymidine_kinase_CS"/>
</dbReference>
<dbReference type="NCBIfam" id="NF003299">
    <property type="entry name" value="PRK04296.1-4"/>
    <property type="match status" value="1"/>
</dbReference>
<dbReference type="NCBIfam" id="NF003300">
    <property type="entry name" value="PRK04296.1-5"/>
    <property type="match status" value="1"/>
</dbReference>
<dbReference type="PANTHER" id="PTHR11441">
    <property type="entry name" value="THYMIDINE KINASE"/>
    <property type="match status" value="1"/>
</dbReference>
<dbReference type="PANTHER" id="PTHR11441:SF0">
    <property type="entry name" value="THYMIDINE KINASE, CYTOSOLIC"/>
    <property type="match status" value="1"/>
</dbReference>
<dbReference type="Pfam" id="PF00265">
    <property type="entry name" value="TK"/>
    <property type="match status" value="1"/>
</dbReference>
<dbReference type="PIRSF" id="PIRSF035805">
    <property type="entry name" value="TK_cell"/>
    <property type="match status" value="1"/>
</dbReference>
<dbReference type="SUPFAM" id="SSF57716">
    <property type="entry name" value="Glucocorticoid receptor-like (DNA-binding domain)"/>
    <property type="match status" value="1"/>
</dbReference>
<dbReference type="SUPFAM" id="SSF52540">
    <property type="entry name" value="P-loop containing nucleoside triphosphate hydrolases"/>
    <property type="match status" value="1"/>
</dbReference>
<dbReference type="PROSITE" id="PS00603">
    <property type="entry name" value="TK_CELLULAR_TYPE"/>
    <property type="match status" value="1"/>
</dbReference>
<evidence type="ECO:0000255" key="1">
    <source>
        <dbReference type="HAMAP-Rule" id="MF_00124"/>
    </source>
</evidence>
<sequence>MAQLYYKYGTMNSGKTIEILKVAHNYEEQGKPVVIMTSALDTRDGFGIVSSRIGMRREAIPISNDMDIFTFIAQLEEKPYCVLIDESQFLSKQNVYDLARVVDELNVPVMAFGLKNDFQNNLFEGSKHLLLLADKIDEIKTICQYCSKKATMVLRTENGKPVYEGDQIQIGGNETYIPVCRKHYFNPEI</sequence>
<comment type="catalytic activity">
    <reaction evidence="1">
        <text>thymidine + ATP = dTMP + ADP + H(+)</text>
        <dbReference type="Rhea" id="RHEA:19129"/>
        <dbReference type="ChEBI" id="CHEBI:15378"/>
        <dbReference type="ChEBI" id="CHEBI:17748"/>
        <dbReference type="ChEBI" id="CHEBI:30616"/>
        <dbReference type="ChEBI" id="CHEBI:63528"/>
        <dbReference type="ChEBI" id="CHEBI:456216"/>
        <dbReference type="EC" id="2.7.1.21"/>
    </reaction>
</comment>
<comment type="subunit">
    <text evidence="1">Homotetramer.</text>
</comment>
<comment type="subcellular location">
    <subcellularLocation>
        <location evidence="1">Cytoplasm</location>
    </subcellularLocation>
</comment>
<comment type="similarity">
    <text evidence="1">Belongs to the thymidine kinase family.</text>
</comment>
<gene>
    <name evidence="1" type="primary">tdk</name>
    <name type="ordered locus">M28_Spy0836</name>
</gene>
<proteinExistence type="inferred from homology"/>
<feature type="chain" id="PRO_0000242811" description="Thymidine kinase">
    <location>
        <begin position="1"/>
        <end position="189"/>
    </location>
</feature>
<feature type="active site" description="Proton acceptor" evidence="1">
    <location>
        <position position="86"/>
    </location>
</feature>
<feature type="binding site" evidence="1">
    <location>
        <begin position="9"/>
        <end position="16"/>
    </location>
    <ligand>
        <name>ATP</name>
        <dbReference type="ChEBI" id="CHEBI:30616"/>
    </ligand>
</feature>
<feature type="binding site" evidence="1">
    <location>
        <begin position="85"/>
        <end position="88"/>
    </location>
    <ligand>
        <name>ATP</name>
        <dbReference type="ChEBI" id="CHEBI:30616"/>
    </ligand>
</feature>
<feature type="binding site" evidence="1">
    <location>
        <position position="143"/>
    </location>
    <ligand>
        <name>Zn(2+)</name>
        <dbReference type="ChEBI" id="CHEBI:29105"/>
    </ligand>
</feature>
<feature type="binding site" evidence="1">
    <location>
        <position position="146"/>
    </location>
    <ligand>
        <name>Zn(2+)</name>
        <dbReference type="ChEBI" id="CHEBI:29105"/>
    </ligand>
</feature>
<feature type="binding site" evidence="1">
    <location>
        <position position="180"/>
    </location>
    <ligand>
        <name>Zn(2+)</name>
        <dbReference type="ChEBI" id="CHEBI:29105"/>
    </ligand>
</feature>
<feature type="binding site" evidence="1">
    <location>
        <position position="183"/>
    </location>
    <ligand>
        <name>Zn(2+)</name>
        <dbReference type="ChEBI" id="CHEBI:29105"/>
    </ligand>
</feature>
<organism>
    <name type="scientific">Streptococcus pyogenes serotype M28 (strain MGAS6180)</name>
    <dbReference type="NCBI Taxonomy" id="319701"/>
    <lineage>
        <taxon>Bacteria</taxon>
        <taxon>Bacillati</taxon>
        <taxon>Bacillota</taxon>
        <taxon>Bacilli</taxon>
        <taxon>Lactobacillales</taxon>
        <taxon>Streptococcaceae</taxon>
        <taxon>Streptococcus</taxon>
    </lineage>
</organism>
<protein>
    <recommendedName>
        <fullName evidence="1">Thymidine kinase</fullName>
        <ecNumber evidence="1">2.7.1.21</ecNumber>
    </recommendedName>
</protein>
<accession>Q48TL1</accession>